<evidence type="ECO:0000255" key="1">
    <source>
        <dbReference type="HAMAP-Rule" id="MF_00023"/>
    </source>
</evidence>
<comment type="function">
    <text evidence="1">Required for rescue of stalled ribosomes mediated by trans-translation. Binds to transfer-messenger RNA (tmRNA), required for stable association of tmRNA with ribosomes. tmRNA and SmpB together mimic tRNA shape, replacing the anticodon stem-loop with SmpB. tmRNA is encoded by the ssrA gene; the 2 termini fold to resemble tRNA(Ala) and it encodes a 'tag peptide', a short internal open reading frame. During trans-translation Ala-aminoacylated tmRNA acts like a tRNA, entering the A-site of stalled ribosomes, displacing the stalled mRNA. The ribosome then switches to translate the ORF on the tmRNA; the nascent peptide is terminated with the 'tag peptide' encoded by the tmRNA and targeted for degradation. The ribosome is freed to recommence translation, which seems to be the essential function of trans-translation.</text>
</comment>
<comment type="subcellular location">
    <subcellularLocation>
        <location evidence="1">Cytoplasm</location>
    </subcellularLocation>
    <text evidence="1">The tmRNA-SmpB complex associates with stalled 70S ribosomes.</text>
</comment>
<comment type="similarity">
    <text evidence="1">Belongs to the SmpB family.</text>
</comment>
<dbReference type="EMBL" id="CP000647">
    <property type="protein sequence ID" value="ABR78348.1"/>
    <property type="molecule type" value="Genomic_DNA"/>
</dbReference>
<dbReference type="RefSeq" id="WP_002914164.1">
    <property type="nucleotide sequence ID" value="NC_009648.1"/>
</dbReference>
<dbReference type="SMR" id="A6TCM7"/>
<dbReference type="STRING" id="272620.KPN_02942"/>
<dbReference type="jPOST" id="A6TCM7"/>
<dbReference type="PaxDb" id="272620-KPN_02942"/>
<dbReference type="EnsemblBacteria" id="ABR78348">
    <property type="protein sequence ID" value="ABR78348"/>
    <property type="gene ID" value="KPN_02942"/>
</dbReference>
<dbReference type="GeneID" id="93271794"/>
<dbReference type="KEGG" id="kpn:KPN_02942"/>
<dbReference type="HOGENOM" id="CLU_108953_3_0_6"/>
<dbReference type="Proteomes" id="UP000000265">
    <property type="component" value="Chromosome"/>
</dbReference>
<dbReference type="GO" id="GO:0005829">
    <property type="term" value="C:cytosol"/>
    <property type="evidence" value="ECO:0007669"/>
    <property type="project" value="TreeGrafter"/>
</dbReference>
<dbReference type="GO" id="GO:0003723">
    <property type="term" value="F:RNA binding"/>
    <property type="evidence" value="ECO:0007669"/>
    <property type="project" value="UniProtKB-UniRule"/>
</dbReference>
<dbReference type="GO" id="GO:0070929">
    <property type="term" value="P:trans-translation"/>
    <property type="evidence" value="ECO:0007669"/>
    <property type="project" value="UniProtKB-UniRule"/>
</dbReference>
<dbReference type="CDD" id="cd09294">
    <property type="entry name" value="SmpB"/>
    <property type="match status" value="1"/>
</dbReference>
<dbReference type="FunFam" id="2.40.280.10:FF:000001">
    <property type="entry name" value="SsrA-binding protein"/>
    <property type="match status" value="1"/>
</dbReference>
<dbReference type="Gene3D" id="2.40.280.10">
    <property type="match status" value="1"/>
</dbReference>
<dbReference type="HAMAP" id="MF_00023">
    <property type="entry name" value="SmpB"/>
    <property type="match status" value="1"/>
</dbReference>
<dbReference type="InterPro" id="IPR023620">
    <property type="entry name" value="SmpB"/>
</dbReference>
<dbReference type="InterPro" id="IPR000037">
    <property type="entry name" value="SsrA-bd_prot"/>
</dbReference>
<dbReference type="InterPro" id="IPR020081">
    <property type="entry name" value="SsrA-bd_prot_CS"/>
</dbReference>
<dbReference type="NCBIfam" id="NF003843">
    <property type="entry name" value="PRK05422.1"/>
    <property type="match status" value="1"/>
</dbReference>
<dbReference type="NCBIfam" id="TIGR00086">
    <property type="entry name" value="smpB"/>
    <property type="match status" value="1"/>
</dbReference>
<dbReference type="PANTHER" id="PTHR30308:SF2">
    <property type="entry name" value="SSRA-BINDING PROTEIN"/>
    <property type="match status" value="1"/>
</dbReference>
<dbReference type="PANTHER" id="PTHR30308">
    <property type="entry name" value="TMRNA-BINDING COMPONENT OF TRANS-TRANSLATION TAGGING COMPLEX"/>
    <property type="match status" value="1"/>
</dbReference>
<dbReference type="Pfam" id="PF01668">
    <property type="entry name" value="SmpB"/>
    <property type="match status" value="1"/>
</dbReference>
<dbReference type="SUPFAM" id="SSF74982">
    <property type="entry name" value="Small protein B (SmpB)"/>
    <property type="match status" value="1"/>
</dbReference>
<dbReference type="PROSITE" id="PS01317">
    <property type="entry name" value="SSRP"/>
    <property type="match status" value="1"/>
</dbReference>
<feature type="chain" id="PRO_1000002070" description="SsrA-binding protein">
    <location>
        <begin position="1"/>
        <end position="160"/>
    </location>
</feature>
<accession>A6TCM7</accession>
<name>SSRP_KLEP7</name>
<sequence length="160" mass="18239">MTKKKAHKPGSATIALNKRARHEYFIEDEYEAGLALQGWEVKSLRAGKANIGDSYVILKDGEAFLFGANFTPMAVASTHYVCDPTRTRKLLLNQRELDTLYGRINREGYTVVALSLYWKNAWCKVKIGVAKGKKQHDKRTDLKDREWALDKARIMKHAGR</sequence>
<organism>
    <name type="scientific">Klebsiella pneumoniae subsp. pneumoniae (strain ATCC 700721 / MGH 78578)</name>
    <dbReference type="NCBI Taxonomy" id="272620"/>
    <lineage>
        <taxon>Bacteria</taxon>
        <taxon>Pseudomonadati</taxon>
        <taxon>Pseudomonadota</taxon>
        <taxon>Gammaproteobacteria</taxon>
        <taxon>Enterobacterales</taxon>
        <taxon>Enterobacteriaceae</taxon>
        <taxon>Klebsiella/Raoultella group</taxon>
        <taxon>Klebsiella</taxon>
        <taxon>Klebsiella pneumoniae complex</taxon>
    </lineage>
</organism>
<reference key="1">
    <citation type="submission" date="2006-09" db="EMBL/GenBank/DDBJ databases">
        <authorList>
            <consortium name="The Klebsiella pneumonia Genome Sequencing Project"/>
            <person name="McClelland M."/>
            <person name="Sanderson E.K."/>
            <person name="Spieth J."/>
            <person name="Clifton W.S."/>
            <person name="Latreille P."/>
            <person name="Sabo A."/>
            <person name="Pepin K."/>
            <person name="Bhonagiri V."/>
            <person name="Porwollik S."/>
            <person name="Ali J."/>
            <person name="Wilson R.K."/>
        </authorList>
    </citation>
    <scope>NUCLEOTIDE SEQUENCE [LARGE SCALE GENOMIC DNA]</scope>
    <source>
        <strain>ATCC 700721 / MGH 78578</strain>
    </source>
</reference>
<gene>
    <name evidence="1" type="primary">smpB</name>
    <name type="ordered locus">KPN78578_28870</name>
    <name type="ORF">KPN_02942</name>
</gene>
<proteinExistence type="inferred from homology"/>
<keyword id="KW-0963">Cytoplasm</keyword>
<keyword id="KW-0694">RNA-binding</keyword>
<protein>
    <recommendedName>
        <fullName evidence="1">SsrA-binding protein</fullName>
    </recommendedName>
    <alternativeName>
        <fullName evidence="1">Small protein B</fullName>
    </alternativeName>
</protein>